<gene>
    <name evidence="1" type="primary">psaA</name>
</gene>
<geneLocation type="chloroplast"/>
<keyword id="KW-0004">4Fe-4S</keyword>
<keyword id="KW-0148">Chlorophyll</keyword>
<keyword id="KW-0150">Chloroplast</keyword>
<keyword id="KW-0157">Chromophore</keyword>
<keyword id="KW-0249">Electron transport</keyword>
<keyword id="KW-0408">Iron</keyword>
<keyword id="KW-0411">Iron-sulfur</keyword>
<keyword id="KW-0460">Magnesium</keyword>
<keyword id="KW-0472">Membrane</keyword>
<keyword id="KW-0479">Metal-binding</keyword>
<keyword id="KW-0560">Oxidoreductase</keyword>
<keyword id="KW-0602">Photosynthesis</keyword>
<keyword id="KW-0603">Photosystem I</keyword>
<keyword id="KW-0934">Plastid</keyword>
<keyword id="KW-1185">Reference proteome</keyword>
<keyword id="KW-0793">Thylakoid</keyword>
<keyword id="KW-0812">Transmembrane</keyword>
<keyword id="KW-1133">Transmembrane helix</keyword>
<keyword id="KW-0813">Transport</keyword>
<protein>
    <recommendedName>
        <fullName evidence="1">Photosystem I P700 chlorophyll a apoprotein A1</fullName>
        <ecNumber evidence="1">1.97.1.12</ecNumber>
    </recommendedName>
    <alternativeName>
        <fullName evidence="1">PSI-A</fullName>
    </alternativeName>
    <alternativeName>
        <fullName evidence="1">PsaA</fullName>
    </alternativeName>
</protein>
<evidence type="ECO:0000255" key="1">
    <source>
        <dbReference type="HAMAP-Rule" id="MF_00458"/>
    </source>
</evidence>
<organism>
    <name type="scientific">Nicotiana sylvestris</name>
    <name type="common">Wood tobacco</name>
    <name type="synonym">South American tobacco</name>
    <dbReference type="NCBI Taxonomy" id="4096"/>
    <lineage>
        <taxon>Eukaryota</taxon>
        <taxon>Viridiplantae</taxon>
        <taxon>Streptophyta</taxon>
        <taxon>Embryophyta</taxon>
        <taxon>Tracheophyta</taxon>
        <taxon>Spermatophyta</taxon>
        <taxon>Magnoliopsida</taxon>
        <taxon>eudicotyledons</taxon>
        <taxon>Gunneridae</taxon>
        <taxon>Pentapetalae</taxon>
        <taxon>asterids</taxon>
        <taxon>lamiids</taxon>
        <taxon>Solanales</taxon>
        <taxon>Solanaceae</taxon>
        <taxon>Nicotianoideae</taxon>
        <taxon>Nicotianeae</taxon>
        <taxon>Nicotiana</taxon>
    </lineage>
</organism>
<dbReference type="EC" id="1.97.1.12" evidence="1"/>
<dbReference type="EMBL" id="AB237912">
    <property type="protein sequence ID" value="BAE46649.1"/>
    <property type="molecule type" value="Genomic_DNA"/>
</dbReference>
<dbReference type="RefSeq" id="YP_358674.1">
    <property type="nucleotide sequence ID" value="NC_007500.1"/>
</dbReference>
<dbReference type="SMR" id="Q3C1H8"/>
<dbReference type="GeneID" id="3735096"/>
<dbReference type="KEGG" id="nsy:3735096"/>
<dbReference type="OrthoDB" id="18643at4085"/>
<dbReference type="Proteomes" id="UP000189701">
    <property type="component" value="Chloroplast Pltd"/>
</dbReference>
<dbReference type="GO" id="GO:0009535">
    <property type="term" value="C:chloroplast thylakoid membrane"/>
    <property type="evidence" value="ECO:0007669"/>
    <property type="project" value="UniProtKB-SubCell"/>
</dbReference>
<dbReference type="GO" id="GO:0009522">
    <property type="term" value="C:photosystem I"/>
    <property type="evidence" value="ECO:0007669"/>
    <property type="project" value="UniProtKB-KW"/>
</dbReference>
<dbReference type="GO" id="GO:0051539">
    <property type="term" value="F:4 iron, 4 sulfur cluster binding"/>
    <property type="evidence" value="ECO:0007669"/>
    <property type="project" value="UniProtKB-KW"/>
</dbReference>
<dbReference type="GO" id="GO:0016168">
    <property type="term" value="F:chlorophyll binding"/>
    <property type="evidence" value="ECO:0007669"/>
    <property type="project" value="UniProtKB-KW"/>
</dbReference>
<dbReference type="GO" id="GO:0009055">
    <property type="term" value="F:electron transfer activity"/>
    <property type="evidence" value="ECO:0007669"/>
    <property type="project" value="UniProtKB-UniRule"/>
</dbReference>
<dbReference type="GO" id="GO:0000287">
    <property type="term" value="F:magnesium ion binding"/>
    <property type="evidence" value="ECO:0007669"/>
    <property type="project" value="UniProtKB-UniRule"/>
</dbReference>
<dbReference type="GO" id="GO:0016491">
    <property type="term" value="F:oxidoreductase activity"/>
    <property type="evidence" value="ECO:0007669"/>
    <property type="project" value="UniProtKB-KW"/>
</dbReference>
<dbReference type="GO" id="GO:0015979">
    <property type="term" value="P:photosynthesis"/>
    <property type="evidence" value="ECO:0007669"/>
    <property type="project" value="UniProtKB-UniRule"/>
</dbReference>
<dbReference type="FunFam" id="1.20.1130.10:FF:000001">
    <property type="entry name" value="Photosystem I P700 chlorophyll a apoprotein A2"/>
    <property type="match status" value="1"/>
</dbReference>
<dbReference type="Gene3D" id="1.20.1130.10">
    <property type="entry name" value="Photosystem I PsaA/PsaB"/>
    <property type="match status" value="1"/>
</dbReference>
<dbReference type="HAMAP" id="MF_00458">
    <property type="entry name" value="PSI_PsaA"/>
    <property type="match status" value="1"/>
</dbReference>
<dbReference type="InterPro" id="IPR006243">
    <property type="entry name" value="PSI_PsaA"/>
</dbReference>
<dbReference type="InterPro" id="IPR001280">
    <property type="entry name" value="PSI_PsaA/B"/>
</dbReference>
<dbReference type="InterPro" id="IPR020586">
    <property type="entry name" value="PSI_PsaA/B_CS"/>
</dbReference>
<dbReference type="InterPro" id="IPR036408">
    <property type="entry name" value="PSI_PsaA/B_sf"/>
</dbReference>
<dbReference type="NCBIfam" id="TIGR01335">
    <property type="entry name" value="psaA"/>
    <property type="match status" value="1"/>
</dbReference>
<dbReference type="PANTHER" id="PTHR30128">
    <property type="entry name" value="OUTER MEMBRANE PROTEIN, OMPA-RELATED"/>
    <property type="match status" value="1"/>
</dbReference>
<dbReference type="PANTHER" id="PTHR30128:SF19">
    <property type="entry name" value="PHOTOSYSTEM I P700 CHLOROPHYLL A APOPROTEIN A1-RELATED"/>
    <property type="match status" value="1"/>
</dbReference>
<dbReference type="Pfam" id="PF00223">
    <property type="entry name" value="PsaA_PsaB"/>
    <property type="match status" value="1"/>
</dbReference>
<dbReference type="PIRSF" id="PIRSF002905">
    <property type="entry name" value="PSI_A"/>
    <property type="match status" value="1"/>
</dbReference>
<dbReference type="PRINTS" id="PR00257">
    <property type="entry name" value="PHOTSYSPSAAB"/>
</dbReference>
<dbReference type="SUPFAM" id="SSF81558">
    <property type="entry name" value="Photosystem I subunits PsaA/PsaB"/>
    <property type="match status" value="1"/>
</dbReference>
<dbReference type="PROSITE" id="PS00419">
    <property type="entry name" value="PHOTOSYSTEM_I_PSAAB"/>
    <property type="match status" value="1"/>
</dbReference>
<comment type="function">
    <text>PsaA and PsaB bind P700, the primary electron donor of photosystem I (PSI), as well as the electron acceptors A0, A1 and FX. PSI is a plastocyanin-ferredoxin oxidoreductase, converting photonic excitation into a charge separation, which transfers an electron from the donor P700 chlorophyll pair to the spectroscopically characterized acceptors A0, A1, FX, FA and FB in turn. Oxidized P700 is reduced on the lumenal side of the thylakoid membrane by plastocyanin.</text>
</comment>
<comment type="catalytic activity">
    <reaction evidence="1">
        <text>reduced [plastocyanin] + hnu + oxidized [2Fe-2S]-[ferredoxin] = oxidized [plastocyanin] + reduced [2Fe-2S]-[ferredoxin]</text>
        <dbReference type="Rhea" id="RHEA:30407"/>
        <dbReference type="Rhea" id="RHEA-COMP:10000"/>
        <dbReference type="Rhea" id="RHEA-COMP:10001"/>
        <dbReference type="Rhea" id="RHEA-COMP:10039"/>
        <dbReference type="Rhea" id="RHEA-COMP:10040"/>
        <dbReference type="ChEBI" id="CHEBI:29036"/>
        <dbReference type="ChEBI" id="CHEBI:30212"/>
        <dbReference type="ChEBI" id="CHEBI:33737"/>
        <dbReference type="ChEBI" id="CHEBI:33738"/>
        <dbReference type="ChEBI" id="CHEBI:49552"/>
        <dbReference type="EC" id="1.97.1.12"/>
    </reaction>
</comment>
<comment type="cofactor">
    <text evidence="1">P700 is a chlorophyll a/chlorophyll a' dimer, A0 is one or more chlorophyll a, A1 is one or both phylloquinones and FX is a shared 4Fe-4S iron-sulfur center.</text>
</comment>
<comment type="subunit">
    <text evidence="1">The PsaA/B heterodimer binds the P700 chlorophyll special pair and subsequent electron acceptors. PSI consists of a core antenna complex that captures photons, and an electron transfer chain that converts photonic excitation into a charge separation. The eukaryotic PSI reaction center is composed of at least 11 subunits.</text>
</comment>
<comment type="subcellular location">
    <subcellularLocation>
        <location evidence="1">Plastid</location>
        <location evidence="1">Chloroplast thylakoid membrane</location>
        <topology evidence="1">Multi-pass membrane protein</topology>
    </subcellularLocation>
</comment>
<comment type="similarity">
    <text evidence="1">Belongs to the PsaA/PsaB family.</text>
</comment>
<accession>Q3C1H8</accession>
<proteinExistence type="inferred from homology"/>
<name>PSAA_NICSY</name>
<feature type="chain" id="PRO_0000275952" description="Photosystem I P700 chlorophyll a apoprotein A1">
    <location>
        <begin position="1"/>
        <end position="750"/>
    </location>
</feature>
<feature type="transmembrane region" description="Helical; Name=I" evidence="1">
    <location>
        <begin position="70"/>
        <end position="93"/>
    </location>
</feature>
<feature type="transmembrane region" description="Helical; Name=II" evidence="1">
    <location>
        <begin position="156"/>
        <end position="179"/>
    </location>
</feature>
<feature type="transmembrane region" description="Helical; Name=III" evidence="1">
    <location>
        <begin position="195"/>
        <end position="219"/>
    </location>
</feature>
<feature type="transmembrane region" description="Helical; Name=IV" evidence="1">
    <location>
        <begin position="291"/>
        <end position="309"/>
    </location>
</feature>
<feature type="transmembrane region" description="Helical; Name=V" evidence="1">
    <location>
        <begin position="346"/>
        <end position="369"/>
    </location>
</feature>
<feature type="transmembrane region" description="Helical; Name=VI" evidence="1">
    <location>
        <begin position="385"/>
        <end position="411"/>
    </location>
</feature>
<feature type="transmembrane region" description="Helical; Name=VII" evidence="1">
    <location>
        <begin position="433"/>
        <end position="455"/>
    </location>
</feature>
<feature type="transmembrane region" description="Helical; Name=VIII" evidence="1">
    <location>
        <begin position="531"/>
        <end position="549"/>
    </location>
</feature>
<feature type="transmembrane region" description="Helical; Name=IX" evidence="1">
    <location>
        <begin position="589"/>
        <end position="610"/>
    </location>
</feature>
<feature type="transmembrane region" description="Helical; Name=X" evidence="1">
    <location>
        <begin position="664"/>
        <end position="686"/>
    </location>
</feature>
<feature type="transmembrane region" description="Helical; Name=XI" evidence="1">
    <location>
        <begin position="724"/>
        <end position="744"/>
    </location>
</feature>
<feature type="binding site" evidence="1">
    <location>
        <position position="573"/>
    </location>
    <ligand>
        <name>[4Fe-4S] cluster</name>
        <dbReference type="ChEBI" id="CHEBI:49883"/>
        <note>ligand shared between dimeric partners</note>
    </ligand>
</feature>
<feature type="binding site" evidence="1">
    <location>
        <position position="582"/>
    </location>
    <ligand>
        <name>[4Fe-4S] cluster</name>
        <dbReference type="ChEBI" id="CHEBI:49883"/>
        <note>ligand shared between dimeric partners</note>
    </ligand>
</feature>
<feature type="binding site" description="axial binding residue" evidence="1">
    <location>
        <position position="675"/>
    </location>
    <ligand>
        <name>chlorophyll a'</name>
        <dbReference type="ChEBI" id="CHEBI:189419"/>
        <label>A1</label>
    </ligand>
    <ligandPart>
        <name>Mg</name>
        <dbReference type="ChEBI" id="CHEBI:25107"/>
    </ligandPart>
</feature>
<feature type="binding site" description="axial binding residue" evidence="1">
    <location>
        <position position="683"/>
    </location>
    <ligand>
        <name>chlorophyll a</name>
        <dbReference type="ChEBI" id="CHEBI:58416"/>
        <label>A3</label>
    </ligand>
    <ligandPart>
        <name>Mg</name>
        <dbReference type="ChEBI" id="CHEBI:25107"/>
    </ligandPart>
</feature>
<feature type="binding site" evidence="1">
    <location>
        <position position="691"/>
    </location>
    <ligand>
        <name>chlorophyll a</name>
        <dbReference type="ChEBI" id="CHEBI:58416"/>
        <label>A3</label>
    </ligand>
</feature>
<feature type="binding site" evidence="1">
    <location>
        <position position="692"/>
    </location>
    <ligand>
        <name>phylloquinone</name>
        <dbReference type="ChEBI" id="CHEBI:18067"/>
        <label>A</label>
    </ligand>
</feature>
<reference key="1">
    <citation type="journal article" date="2006" name="Mol. Genet. Genomics">
        <title>The chloroplast genome of Nicotiana sylvestris and Nicotiana tomentosiformis: complete sequencing confirms that the Nicotiana sylvestris progenitor is the maternal genome donor of Nicotiana tabacum.</title>
        <authorList>
            <person name="Yukawa M."/>
            <person name="Tsudzuki T."/>
            <person name="Sugiura M."/>
        </authorList>
    </citation>
    <scope>NUCLEOTIDE SEQUENCE [LARGE SCALE GENOMIC DNA]</scope>
</reference>
<sequence>MIIRSPEPEVKILVDRDPVKTSFEEWARPGHFSRTIAKGPDTTTWIWNLHADAHDFDSHTSDLEEISRKVFSAHFGQLSIIFLWLSGMYFHGARFSNYEAWLSDPTHIGPSAQVVWPIVGQEILNGDVGGGFRGIQITSGFFQIWRASGITSELQLYCTAIGALVFAALMLFAGWFHYHKAAPKLAWFQDVESMLNHHLAGLLGLGSLSWAGHQVHVSLPINQFLNAGVDPKEIPLPHEFILNRDLLAQLYPSFAEGATPFFTLNWSKYADFLTFRGGLDPVTGGLWLTDIAHHHLAIAILFLIAGHMYRTNWGIGHGLKDILEAHKGPFTGQGHKGLYEILTTSWHAQLSLNLAMLGSLTIVVAHHMYSMPPYPYLATDYGTQLSLFTHHMWIGGFLIVGAAAHAAIFMVRDYDPTTRYNDLLDRVLRHRDAIISHLNWACIFLGFHSFGLYIHNDTMSALGRPQDMFSDTAIQLQPVFAQWIQNTHALAPGATAPGATASTSLTWGGGDLVAVGGKVALLPIPLGTADFLVHHIHAFTIHVTVLILLKGVLFARSSRLIPDKANLGFRFPCDGPGRGGTCQVSAWDHVFLGLFWMYNAISVVIFHFSWKMQSDVWGSVSDQGVVTHITGGNFAQSSITINGWLRDFLWAQASQVIQSYGSSLSAYGLFFLGAHFVWAFSLMFLFSGRGYWQELIESIVWAHNKLKVAPATQPRALSIIQGRAVGVTHYLLGGIATTWAFFLARIIAVG</sequence>